<organism>
    <name type="scientific">Geotalea daltonii (strain DSM 22248 / JCM 15807 / FRC-32)</name>
    <name type="common">Geobacter daltonii</name>
    <dbReference type="NCBI Taxonomy" id="316067"/>
    <lineage>
        <taxon>Bacteria</taxon>
        <taxon>Pseudomonadati</taxon>
        <taxon>Thermodesulfobacteriota</taxon>
        <taxon>Desulfuromonadia</taxon>
        <taxon>Geobacterales</taxon>
        <taxon>Geobacteraceae</taxon>
        <taxon>Geotalea</taxon>
    </lineage>
</organism>
<accession>B9M1X7</accession>
<dbReference type="EC" id="2.2.1.2" evidence="1"/>
<dbReference type="EMBL" id="CP001390">
    <property type="protein sequence ID" value="ACM19273.1"/>
    <property type="molecule type" value="Genomic_DNA"/>
</dbReference>
<dbReference type="RefSeq" id="WP_012646002.1">
    <property type="nucleotide sequence ID" value="NC_011979.1"/>
</dbReference>
<dbReference type="SMR" id="B9M1X7"/>
<dbReference type="STRING" id="316067.Geob_0911"/>
<dbReference type="KEGG" id="geo:Geob_0911"/>
<dbReference type="eggNOG" id="COG0176">
    <property type="taxonomic scope" value="Bacteria"/>
</dbReference>
<dbReference type="HOGENOM" id="CLU_079764_0_0_7"/>
<dbReference type="OrthoDB" id="9807051at2"/>
<dbReference type="UniPathway" id="UPA00115">
    <property type="reaction ID" value="UER00414"/>
</dbReference>
<dbReference type="Proteomes" id="UP000007721">
    <property type="component" value="Chromosome"/>
</dbReference>
<dbReference type="GO" id="GO:0005737">
    <property type="term" value="C:cytoplasm"/>
    <property type="evidence" value="ECO:0007669"/>
    <property type="project" value="UniProtKB-SubCell"/>
</dbReference>
<dbReference type="GO" id="GO:0016832">
    <property type="term" value="F:aldehyde-lyase activity"/>
    <property type="evidence" value="ECO:0007669"/>
    <property type="project" value="InterPro"/>
</dbReference>
<dbReference type="GO" id="GO:0004801">
    <property type="term" value="F:transaldolase activity"/>
    <property type="evidence" value="ECO:0007669"/>
    <property type="project" value="UniProtKB-UniRule"/>
</dbReference>
<dbReference type="GO" id="GO:0005975">
    <property type="term" value="P:carbohydrate metabolic process"/>
    <property type="evidence" value="ECO:0007669"/>
    <property type="project" value="InterPro"/>
</dbReference>
<dbReference type="GO" id="GO:0006098">
    <property type="term" value="P:pentose-phosphate shunt"/>
    <property type="evidence" value="ECO:0007669"/>
    <property type="project" value="UniProtKB-UniRule"/>
</dbReference>
<dbReference type="CDD" id="cd00956">
    <property type="entry name" value="Transaldolase_FSA"/>
    <property type="match status" value="1"/>
</dbReference>
<dbReference type="FunFam" id="3.20.20.70:FF:000018">
    <property type="entry name" value="Probable transaldolase"/>
    <property type="match status" value="1"/>
</dbReference>
<dbReference type="Gene3D" id="3.20.20.70">
    <property type="entry name" value="Aldolase class I"/>
    <property type="match status" value="1"/>
</dbReference>
<dbReference type="HAMAP" id="MF_00494">
    <property type="entry name" value="Transaldolase_3b"/>
    <property type="match status" value="1"/>
</dbReference>
<dbReference type="InterPro" id="IPR013785">
    <property type="entry name" value="Aldolase_TIM"/>
</dbReference>
<dbReference type="InterPro" id="IPR001585">
    <property type="entry name" value="TAL/FSA"/>
</dbReference>
<dbReference type="InterPro" id="IPR022999">
    <property type="entry name" value="Transaldolase_3B"/>
</dbReference>
<dbReference type="InterPro" id="IPR004731">
    <property type="entry name" value="Transaldolase_3B/F6P_aldolase"/>
</dbReference>
<dbReference type="InterPro" id="IPR018225">
    <property type="entry name" value="Transaldolase_AS"/>
</dbReference>
<dbReference type="InterPro" id="IPR033919">
    <property type="entry name" value="TSA/FSA_arc/bac"/>
</dbReference>
<dbReference type="NCBIfam" id="TIGR00875">
    <property type="entry name" value="fsa_talC_mipB"/>
    <property type="match status" value="1"/>
</dbReference>
<dbReference type="PANTHER" id="PTHR10683:SF40">
    <property type="entry name" value="FRUCTOSE-6-PHOSPHATE ALDOLASE 1-RELATED"/>
    <property type="match status" value="1"/>
</dbReference>
<dbReference type="PANTHER" id="PTHR10683">
    <property type="entry name" value="TRANSALDOLASE"/>
    <property type="match status" value="1"/>
</dbReference>
<dbReference type="Pfam" id="PF00923">
    <property type="entry name" value="TAL_FSA"/>
    <property type="match status" value="1"/>
</dbReference>
<dbReference type="SUPFAM" id="SSF51569">
    <property type="entry name" value="Aldolase"/>
    <property type="match status" value="1"/>
</dbReference>
<dbReference type="PROSITE" id="PS01054">
    <property type="entry name" value="TRANSALDOLASE_1"/>
    <property type="match status" value="1"/>
</dbReference>
<dbReference type="PROSITE" id="PS00958">
    <property type="entry name" value="TRANSALDOLASE_2"/>
    <property type="match status" value="1"/>
</dbReference>
<keyword id="KW-0963">Cytoplasm</keyword>
<keyword id="KW-0570">Pentose shunt</keyword>
<keyword id="KW-1185">Reference proteome</keyword>
<keyword id="KW-0704">Schiff base</keyword>
<keyword id="KW-0808">Transferase</keyword>
<evidence type="ECO:0000255" key="1">
    <source>
        <dbReference type="HAMAP-Rule" id="MF_00494"/>
    </source>
</evidence>
<reference key="1">
    <citation type="submission" date="2009-01" db="EMBL/GenBank/DDBJ databases">
        <title>Complete sequence of Geobacter sp. FRC-32.</title>
        <authorList>
            <consortium name="US DOE Joint Genome Institute"/>
            <person name="Lucas S."/>
            <person name="Copeland A."/>
            <person name="Lapidus A."/>
            <person name="Glavina del Rio T."/>
            <person name="Dalin E."/>
            <person name="Tice H."/>
            <person name="Bruce D."/>
            <person name="Goodwin L."/>
            <person name="Pitluck S."/>
            <person name="Saunders E."/>
            <person name="Brettin T."/>
            <person name="Detter J.C."/>
            <person name="Han C."/>
            <person name="Larimer F."/>
            <person name="Land M."/>
            <person name="Hauser L."/>
            <person name="Kyrpides N."/>
            <person name="Ovchinnikova G."/>
            <person name="Kostka J."/>
            <person name="Richardson P."/>
        </authorList>
    </citation>
    <scope>NUCLEOTIDE SEQUENCE [LARGE SCALE GENOMIC DNA]</scope>
    <source>
        <strain>DSM 22248 / JCM 15807 / FRC-32</strain>
    </source>
</reference>
<sequence length="214" mass="23149">MKFFIDTADVKEIREAHELGVVDGVTTNPSLIAKSGRKFADVIKEISGIVDGPISAEVVSLEHDGMISEAEELVKIHPNIVIKLPMTPEGLKATKTLSAKGIKTNVTLIFTPMQALLAAKAGATYVSPFVGRLDDISQDGMGIIEEIRTIFDNYGYTAEIIVASIRNPIHVLNSALIGADVATIPFSVIMQLAKHPLTDAGIKKFLEDWEKVPK</sequence>
<protein>
    <recommendedName>
        <fullName evidence="1">Probable transaldolase</fullName>
        <ecNumber evidence="1">2.2.1.2</ecNumber>
    </recommendedName>
</protein>
<gene>
    <name evidence="1" type="primary">tal</name>
    <name type="ordered locus">Geob_0911</name>
</gene>
<name>TAL_GEODF</name>
<feature type="chain" id="PRO_1000198473" description="Probable transaldolase">
    <location>
        <begin position="1"/>
        <end position="214"/>
    </location>
</feature>
<feature type="active site" description="Schiff-base intermediate with substrate" evidence="1">
    <location>
        <position position="83"/>
    </location>
</feature>
<comment type="function">
    <text evidence="1">Transaldolase is important for the balance of metabolites in the pentose-phosphate pathway.</text>
</comment>
<comment type="catalytic activity">
    <reaction evidence="1">
        <text>D-sedoheptulose 7-phosphate + D-glyceraldehyde 3-phosphate = D-erythrose 4-phosphate + beta-D-fructose 6-phosphate</text>
        <dbReference type="Rhea" id="RHEA:17053"/>
        <dbReference type="ChEBI" id="CHEBI:16897"/>
        <dbReference type="ChEBI" id="CHEBI:57483"/>
        <dbReference type="ChEBI" id="CHEBI:57634"/>
        <dbReference type="ChEBI" id="CHEBI:59776"/>
        <dbReference type="EC" id="2.2.1.2"/>
    </reaction>
</comment>
<comment type="pathway">
    <text evidence="1">Carbohydrate degradation; pentose phosphate pathway; D-glyceraldehyde 3-phosphate and beta-D-fructose 6-phosphate from D-ribose 5-phosphate and D-xylulose 5-phosphate (non-oxidative stage): step 2/3.</text>
</comment>
<comment type="subcellular location">
    <subcellularLocation>
        <location evidence="1">Cytoplasm</location>
    </subcellularLocation>
</comment>
<comment type="similarity">
    <text evidence="1">Belongs to the transaldolase family. Type 3B subfamily.</text>
</comment>
<proteinExistence type="inferred from homology"/>